<keyword id="KW-0997">Cell inner membrane</keyword>
<keyword id="KW-1003">Cell membrane</keyword>
<keyword id="KW-0406">Ion transport</keyword>
<keyword id="KW-0472">Membrane</keyword>
<keyword id="KW-0520">NAD</keyword>
<keyword id="KW-1185">Reference proteome</keyword>
<keyword id="KW-0915">Sodium</keyword>
<keyword id="KW-0739">Sodium transport</keyword>
<keyword id="KW-1278">Translocase</keyword>
<keyword id="KW-0812">Transmembrane</keyword>
<keyword id="KW-1133">Transmembrane helix</keyword>
<keyword id="KW-0813">Transport</keyword>
<keyword id="KW-0830">Ubiquinone</keyword>
<feature type="chain" id="PRO_1000060203" description="Na(+)-translocating NADH-quinone reductase subunit E">
    <location>
        <begin position="1"/>
        <end position="202"/>
    </location>
</feature>
<feature type="transmembrane region" description="Helical" evidence="1">
    <location>
        <begin position="4"/>
        <end position="24"/>
    </location>
</feature>
<feature type="transmembrane region" description="Helical" evidence="1">
    <location>
        <begin position="35"/>
        <end position="55"/>
    </location>
</feature>
<feature type="transmembrane region" description="Helical" evidence="1">
    <location>
        <begin position="81"/>
        <end position="101"/>
    </location>
</feature>
<feature type="transmembrane region" description="Helical" evidence="1">
    <location>
        <begin position="114"/>
        <end position="134"/>
    </location>
</feature>
<feature type="transmembrane region" description="Helical" evidence="1">
    <location>
        <begin position="144"/>
        <end position="164"/>
    </location>
</feature>
<feature type="transmembrane region" description="Helical" evidence="1">
    <location>
        <begin position="180"/>
        <end position="200"/>
    </location>
</feature>
<accession>Q82SE7</accession>
<name>NQRE_NITEU</name>
<comment type="function">
    <text evidence="1">NQR complex catalyzes the reduction of ubiquinone-1 to ubiquinol by two successive reactions, coupled with the transport of Na(+) ions from the cytoplasm to the periplasm. NqrA to NqrE are probably involved in the second step, the conversion of ubisemiquinone to ubiquinol.</text>
</comment>
<comment type="catalytic activity">
    <reaction evidence="1">
        <text>a ubiquinone + n Na(+)(in) + NADH + H(+) = a ubiquinol + n Na(+)(out) + NAD(+)</text>
        <dbReference type="Rhea" id="RHEA:47748"/>
        <dbReference type="Rhea" id="RHEA-COMP:9565"/>
        <dbReference type="Rhea" id="RHEA-COMP:9566"/>
        <dbReference type="ChEBI" id="CHEBI:15378"/>
        <dbReference type="ChEBI" id="CHEBI:16389"/>
        <dbReference type="ChEBI" id="CHEBI:17976"/>
        <dbReference type="ChEBI" id="CHEBI:29101"/>
        <dbReference type="ChEBI" id="CHEBI:57540"/>
        <dbReference type="ChEBI" id="CHEBI:57945"/>
        <dbReference type="EC" id="7.2.1.1"/>
    </reaction>
</comment>
<comment type="subunit">
    <text evidence="1">Composed of six subunits; NqrA, NqrB, NqrC, NqrD, NqrE and NqrF.</text>
</comment>
<comment type="subcellular location">
    <subcellularLocation>
        <location evidence="1">Cell inner membrane</location>
        <topology evidence="1">Multi-pass membrane protein</topology>
    </subcellularLocation>
</comment>
<comment type="similarity">
    <text evidence="1">Belongs to the NqrDE/RnfAE family.</text>
</comment>
<evidence type="ECO:0000255" key="1">
    <source>
        <dbReference type="HAMAP-Rule" id="MF_00429"/>
    </source>
</evidence>
<organism>
    <name type="scientific">Nitrosomonas europaea (strain ATCC 19718 / CIP 103999 / KCTC 2705 / NBRC 14298)</name>
    <dbReference type="NCBI Taxonomy" id="228410"/>
    <lineage>
        <taxon>Bacteria</taxon>
        <taxon>Pseudomonadati</taxon>
        <taxon>Pseudomonadota</taxon>
        <taxon>Betaproteobacteria</taxon>
        <taxon>Nitrosomonadales</taxon>
        <taxon>Nitrosomonadaceae</taxon>
        <taxon>Nitrosomonas</taxon>
    </lineage>
</organism>
<proteinExistence type="inferred from homology"/>
<gene>
    <name evidence="1" type="primary">nqrE</name>
    <name type="ordered locus">NE2393</name>
</gene>
<protein>
    <recommendedName>
        <fullName evidence="1">Na(+)-translocating NADH-quinone reductase subunit E</fullName>
        <shortName evidence="1">Na(+)-NQR subunit E</shortName>
        <shortName evidence="1">Na(+)-translocating NQR subunit E</shortName>
        <ecNumber evidence="1">7.2.1.1</ecNumber>
    </recommendedName>
    <alternativeName>
        <fullName evidence="1">NQR complex subunit E</fullName>
    </alternativeName>
    <alternativeName>
        <fullName evidence="1">NQR-1 subunit E</fullName>
    </alternativeName>
</protein>
<sequence length="202" mass="21707">MNSLAGLFITAVFVENLALTFFLGMCTFLAISKKIEVAFGMGIAVIVVQTLTVPINNLVYQYLLRDGALVWAGLAEIDLTFLGLVSYLGVIAAIVQILEMFLDRFMPALHSALGIYLPLIAVNCAILGGSLFMVERDYNFTESLVYGLGSGFGWALAIVALAGVRERLKYSDVPDGLQGLGITFISAGLMAMGFMAFSGIRL</sequence>
<dbReference type="EC" id="7.2.1.1" evidence="1"/>
<dbReference type="EMBL" id="AL954747">
    <property type="protein sequence ID" value="CAD86305.1"/>
    <property type="molecule type" value="Genomic_DNA"/>
</dbReference>
<dbReference type="RefSeq" id="WP_011112866.1">
    <property type="nucleotide sequence ID" value="NC_004757.1"/>
</dbReference>
<dbReference type="SMR" id="Q82SE7"/>
<dbReference type="STRING" id="228410.NE2393"/>
<dbReference type="GeneID" id="87105524"/>
<dbReference type="KEGG" id="neu:NE2393"/>
<dbReference type="eggNOG" id="COG2209">
    <property type="taxonomic scope" value="Bacteria"/>
</dbReference>
<dbReference type="HOGENOM" id="CLU_095255_0_0_4"/>
<dbReference type="OrthoDB" id="9803631at2"/>
<dbReference type="PhylomeDB" id="Q82SE7"/>
<dbReference type="Proteomes" id="UP000001416">
    <property type="component" value="Chromosome"/>
</dbReference>
<dbReference type="GO" id="GO:0009276">
    <property type="term" value="C:Gram-negative-bacterium-type cell wall"/>
    <property type="evidence" value="ECO:0007669"/>
    <property type="project" value="InterPro"/>
</dbReference>
<dbReference type="GO" id="GO:0005886">
    <property type="term" value="C:plasma membrane"/>
    <property type="evidence" value="ECO:0007669"/>
    <property type="project" value="UniProtKB-SubCell"/>
</dbReference>
<dbReference type="GO" id="GO:0016655">
    <property type="term" value="F:oxidoreductase activity, acting on NAD(P)H, quinone or similar compound as acceptor"/>
    <property type="evidence" value="ECO:0007669"/>
    <property type="project" value="UniProtKB-UniRule"/>
</dbReference>
<dbReference type="GO" id="GO:0022904">
    <property type="term" value="P:respiratory electron transport chain"/>
    <property type="evidence" value="ECO:0007669"/>
    <property type="project" value="InterPro"/>
</dbReference>
<dbReference type="GO" id="GO:0006814">
    <property type="term" value="P:sodium ion transport"/>
    <property type="evidence" value="ECO:0007669"/>
    <property type="project" value="UniProtKB-UniRule"/>
</dbReference>
<dbReference type="HAMAP" id="MF_00429">
    <property type="entry name" value="NqrE"/>
    <property type="match status" value="1"/>
</dbReference>
<dbReference type="InterPro" id="IPR003667">
    <property type="entry name" value="NqrDE/RnfAE"/>
</dbReference>
<dbReference type="InterPro" id="IPR050133">
    <property type="entry name" value="NqrDE/RnfAE_oxidrdctase"/>
</dbReference>
<dbReference type="InterPro" id="IPR010967">
    <property type="entry name" value="NqrE"/>
</dbReference>
<dbReference type="NCBIfam" id="TIGR01940">
    <property type="entry name" value="nqrE"/>
    <property type="match status" value="1"/>
</dbReference>
<dbReference type="PANTHER" id="PTHR30335">
    <property type="entry name" value="INTEGRAL MEMBRANE PROTEIN OF SOXR-REDUCING COMPLEX"/>
    <property type="match status" value="1"/>
</dbReference>
<dbReference type="PANTHER" id="PTHR30335:SF1">
    <property type="entry name" value="NA(+)-TRANSLOCATING NADH-QUINONE REDUCTASE SUBUNIT E"/>
    <property type="match status" value="1"/>
</dbReference>
<dbReference type="Pfam" id="PF02508">
    <property type="entry name" value="Rnf-Nqr"/>
    <property type="match status" value="1"/>
</dbReference>
<dbReference type="PIRSF" id="PIRSF006102">
    <property type="entry name" value="NQR_DE"/>
    <property type="match status" value="1"/>
</dbReference>
<reference key="1">
    <citation type="journal article" date="2003" name="J. Bacteriol.">
        <title>Complete genome sequence of the ammonia-oxidizing bacterium and obligate chemolithoautotroph Nitrosomonas europaea.</title>
        <authorList>
            <person name="Chain P."/>
            <person name="Lamerdin J.E."/>
            <person name="Larimer F.W."/>
            <person name="Regala W."/>
            <person name="Lao V."/>
            <person name="Land M.L."/>
            <person name="Hauser L."/>
            <person name="Hooper A.B."/>
            <person name="Klotz M.G."/>
            <person name="Norton J."/>
            <person name="Sayavedra-Soto L.A."/>
            <person name="Arciero D.M."/>
            <person name="Hommes N.G."/>
            <person name="Whittaker M.M."/>
            <person name="Arp D.J."/>
        </authorList>
    </citation>
    <scope>NUCLEOTIDE SEQUENCE [LARGE SCALE GENOMIC DNA]</scope>
    <source>
        <strain>ATCC 19718 / CIP 103999 / KCTC 2705 / NBRC 14298</strain>
    </source>
</reference>